<name>DRD1L_TAKRU</name>
<evidence type="ECO:0000250" key="1">
    <source>
        <dbReference type="UniProtKB" id="P21728"/>
    </source>
</evidence>
<evidence type="ECO:0000255" key="2"/>
<evidence type="ECO:0000255" key="3">
    <source>
        <dbReference type="PROSITE-ProRule" id="PRU00521"/>
    </source>
</evidence>
<protein>
    <recommendedName>
        <fullName>D(1)-like dopamine receptor</fullName>
    </recommendedName>
</protein>
<sequence>MAQNFSTVGDGKQMLLERDSSKRVLTGCFLSLLIFTTLLGNTLVCVAVTKFRHLRSKVTNFFVISLAISDLLVAILVMPWKAATEIMGFWPFGEFCNIWVAFDIMCSTASILNLCVISVDRYWAISSPFRYERKMTPKVACLMISVAWTLSVLISFIPVQLNWHKAQTASYVELNGTYAGDLPPDNCDSSLNRTYAISSSLISFYIPVAIMIVTYTRIYRIAQKQIRRISALERAAESAQNRHSSMGNSLSMESECSFKMSFKRETKVLKTLSVIMGVFVCCWLPFFILNCMVPFCEADDTTDFPCISSTTFDVFVWFGWANSSLNPIIYAFNADFRKAFSILLGCHRLCPGNSAIEIVSINNTGAPLSNPSCQYQPKSHIPKEGNHSSSYVIPHSILCQEEELQKKDGFGGEMEVGLVNNAMEKVSPAISGNFDSDAAVTLETINPITQNGQHKSMSC</sequence>
<reference key="1">
    <citation type="journal article" date="1995" name="Genomics">
        <title>Analysis of the dopamine receptor family in the compact genome of the puffer fish Fugu rubripes.</title>
        <authorList>
            <person name="Machae A.D."/>
            <person name="Brenner S."/>
        </authorList>
    </citation>
    <scope>NUCLEOTIDE SEQUENCE [GENOMIC DNA]</scope>
</reference>
<keyword id="KW-1003">Cell membrane</keyword>
<keyword id="KW-0966">Cell projection</keyword>
<keyword id="KW-1015">Disulfide bond</keyword>
<keyword id="KW-0297">G-protein coupled receptor</keyword>
<keyword id="KW-0325">Glycoprotein</keyword>
<keyword id="KW-0472">Membrane</keyword>
<keyword id="KW-0675">Receptor</keyword>
<keyword id="KW-1185">Reference proteome</keyword>
<keyword id="KW-0807">Transducer</keyword>
<keyword id="KW-0812">Transmembrane</keyword>
<keyword id="KW-1133">Transmembrane helix</keyword>
<dbReference type="EMBL" id="X80174">
    <property type="protein sequence ID" value="CAA56455.1"/>
    <property type="molecule type" value="Genomic_DNA"/>
</dbReference>
<dbReference type="PIR" id="A56849">
    <property type="entry name" value="A56849"/>
</dbReference>
<dbReference type="SMR" id="P53452"/>
<dbReference type="FunCoup" id="P53452">
    <property type="interactions" value="694"/>
</dbReference>
<dbReference type="STRING" id="31033.ENSTRUP00000008419"/>
<dbReference type="GlyCosmos" id="P53452">
    <property type="glycosylation" value="1 site, No reported glycans"/>
</dbReference>
<dbReference type="eggNOG" id="KOG3656">
    <property type="taxonomic scope" value="Eukaryota"/>
</dbReference>
<dbReference type="InParanoid" id="P53452"/>
<dbReference type="Proteomes" id="UP000005226">
    <property type="component" value="Unplaced"/>
</dbReference>
<dbReference type="GO" id="GO:0060170">
    <property type="term" value="C:ciliary membrane"/>
    <property type="evidence" value="ECO:0007669"/>
    <property type="project" value="UniProtKB-SubCell"/>
</dbReference>
<dbReference type="GO" id="GO:0045202">
    <property type="term" value="C:synapse"/>
    <property type="evidence" value="ECO:0007669"/>
    <property type="project" value="GOC"/>
</dbReference>
<dbReference type="GO" id="GO:0001588">
    <property type="term" value="F:dopamine neurotransmitter receptor activity, coupled via Gs"/>
    <property type="evidence" value="ECO:0007669"/>
    <property type="project" value="TreeGrafter"/>
</dbReference>
<dbReference type="GO" id="GO:0004930">
    <property type="term" value="F:G protein-coupled receptor activity"/>
    <property type="evidence" value="ECO:0007669"/>
    <property type="project" value="UniProtKB-KW"/>
</dbReference>
<dbReference type="GO" id="GO:0071880">
    <property type="term" value="P:adenylate cyclase-activating adrenergic receptor signaling pathway"/>
    <property type="evidence" value="ECO:0007669"/>
    <property type="project" value="TreeGrafter"/>
</dbReference>
<dbReference type="GO" id="GO:0043410">
    <property type="term" value="P:positive regulation of MAPK cascade"/>
    <property type="evidence" value="ECO:0007669"/>
    <property type="project" value="TreeGrafter"/>
</dbReference>
<dbReference type="GO" id="GO:0042311">
    <property type="term" value="P:vasodilation"/>
    <property type="evidence" value="ECO:0007669"/>
    <property type="project" value="InterPro"/>
</dbReference>
<dbReference type="FunFam" id="1.20.1070.10:FF:000045">
    <property type="entry name" value="D(1A) dopamine receptor"/>
    <property type="match status" value="1"/>
</dbReference>
<dbReference type="Gene3D" id="1.20.1070.10">
    <property type="entry name" value="Rhodopsin 7-helix transmembrane proteins"/>
    <property type="match status" value="1"/>
</dbReference>
<dbReference type="InterPro" id="IPR001413">
    <property type="entry name" value="Dopamine_D1_rcpt"/>
</dbReference>
<dbReference type="InterPro" id="IPR000929">
    <property type="entry name" value="Dopamine_rcpt"/>
</dbReference>
<dbReference type="InterPro" id="IPR000276">
    <property type="entry name" value="GPCR_Rhodpsn"/>
</dbReference>
<dbReference type="InterPro" id="IPR017452">
    <property type="entry name" value="GPCR_Rhodpsn_7TM"/>
</dbReference>
<dbReference type="PANTHER" id="PTHR24248">
    <property type="entry name" value="ADRENERGIC RECEPTOR-RELATED G-PROTEIN COUPLED RECEPTOR"/>
    <property type="match status" value="1"/>
</dbReference>
<dbReference type="PANTHER" id="PTHR24248:SF197">
    <property type="entry name" value="D(1A) DOPAMINE RECEPTOR"/>
    <property type="match status" value="1"/>
</dbReference>
<dbReference type="Pfam" id="PF00001">
    <property type="entry name" value="7tm_1"/>
    <property type="match status" value="1"/>
</dbReference>
<dbReference type="PRINTS" id="PR00565">
    <property type="entry name" value="DOPAMINED1AR"/>
</dbReference>
<dbReference type="PRINTS" id="PR00242">
    <property type="entry name" value="DOPAMINER"/>
</dbReference>
<dbReference type="PRINTS" id="PR00237">
    <property type="entry name" value="GPCRRHODOPSN"/>
</dbReference>
<dbReference type="SMART" id="SM01381">
    <property type="entry name" value="7TM_GPCR_Srsx"/>
    <property type="match status" value="1"/>
</dbReference>
<dbReference type="SUPFAM" id="SSF81321">
    <property type="entry name" value="Family A G protein-coupled receptor-like"/>
    <property type="match status" value="1"/>
</dbReference>
<dbReference type="PROSITE" id="PS00237">
    <property type="entry name" value="G_PROTEIN_RECEP_F1_1"/>
    <property type="match status" value="1"/>
</dbReference>
<dbReference type="PROSITE" id="PS50262">
    <property type="entry name" value="G_PROTEIN_RECEP_F1_2"/>
    <property type="match status" value="1"/>
</dbReference>
<accession>P53452</accession>
<feature type="chain" id="PRO_0000069382" description="D(1)-like dopamine receptor">
    <location>
        <begin position="1"/>
        <end position="459"/>
    </location>
</feature>
<feature type="topological domain" description="Extracellular" evidence="2">
    <location>
        <begin position="1"/>
        <end position="23"/>
    </location>
</feature>
<feature type="transmembrane region" description="Helical; Name=1" evidence="2">
    <location>
        <begin position="24"/>
        <end position="49"/>
    </location>
</feature>
<feature type="topological domain" description="Cytoplasmic" evidence="2">
    <location>
        <begin position="50"/>
        <end position="60"/>
    </location>
</feature>
<feature type="transmembrane region" description="Helical; Name=2" evidence="2">
    <location>
        <begin position="61"/>
        <end position="87"/>
    </location>
</feature>
<feature type="topological domain" description="Extracellular" evidence="2">
    <location>
        <begin position="88"/>
        <end position="96"/>
    </location>
</feature>
<feature type="transmembrane region" description="Helical; Name=3" evidence="2">
    <location>
        <begin position="97"/>
        <end position="119"/>
    </location>
</feature>
<feature type="topological domain" description="Cytoplasmic" evidence="2">
    <location>
        <begin position="120"/>
        <end position="138"/>
    </location>
</feature>
<feature type="transmembrane region" description="Helical; Name=4" evidence="2">
    <location>
        <begin position="139"/>
        <end position="164"/>
    </location>
</feature>
<feature type="topological domain" description="Extracellular" evidence="2">
    <location>
        <begin position="165"/>
        <end position="191"/>
    </location>
</feature>
<feature type="transmembrane region" description="Helical; Name=5" evidence="2">
    <location>
        <begin position="192"/>
        <end position="216"/>
    </location>
</feature>
<feature type="topological domain" description="Cytoplasmic" evidence="2">
    <location>
        <begin position="217"/>
        <end position="269"/>
    </location>
</feature>
<feature type="transmembrane region" description="Helical; Name=6" evidence="2">
    <location>
        <begin position="270"/>
        <end position="297"/>
    </location>
</feature>
<feature type="topological domain" description="Extracellular" evidence="2">
    <location>
        <begin position="298"/>
        <end position="311"/>
    </location>
</feature>
<feature type="transmembrane region" description="Helical; Name=7" evidence="2">
    <location>
        <begin position="312"/>
        <end position="333"/>
    </location>
</feature>
<feature type="topological domain" description="Cytoplasmic" evidence="2">
    <location>
        <begin position="334"/>
        <end position="459"/>
    </location>
</feature>
<feature type="glycosylation site" description="N-linked (GlcNAc...) asparagine" evidence="2">
    <location>
        <position position="4"/>
    </location>
</feature>
<feature type="disulfide bond" evidence="3">
    <location>
        <begin position="96"/>
        <end position="187"/>
    </location>
</feature>
<gene>
    <name type="primary">d14</name>
</gene>
<organism>
    <name type="scientific">Takifugu rubripes</name>
    <name type="common">Japanese pufferfish</name>
    <name type="synonym">Fugu rubripes</name>
    <dbReference type="NCBI Taxonomy" id="31033"/>
    <lineage>
        <taxon>Eukaryota</taxon>
        <taxon>Metazoa</taxon>
        <taxon>Chordata</taxon>
        <taxon>Craniata</taxon>
        <taxon>Vertebrata</taxon>
        <taxon>Euteleostomi</taxon>
        <taxon>Actinopterygii</taxon>
        <taxon>Neopterygii</taxon>
        <taxon>Teleostei</taxon>
        <taxon>Neoteleostei</taxon>
        <taxon>Acanthomorphata</taxon>
        <taxon>Eupercaria</taxon>
        <taxon>Tetraodontiformes</taxon>
        <taxon>Tetradontoidea</taxon>
        <taxon>Tetraodontidae</taxon>
        <taxon>Takifugu</taxon>
    </lineage>
</organism>
<comment type="function">
    <text>Receptor for dopamine.</text>
</comment>
<comment type="subcellular location">
    <subcellularLocation>
        <location>Cell membrane</location>
        <topology>Multi-pass membrane protein</topology>
    </subcellularLocation>
    <subcellularLocation>
        <location evidence="1">Cell projection</location>
        <location evidence="1">Cilium membrane</location>
        <topology evidence="2">Multi-pass membrane protein</topology>
    </subcellularLocation>
</comment>
<comment type="similarity">
    <text evidence="3">Belongs to the G-protein coupled receptor 1 family.</text>
</comment>
<proteinExistence type="inferred from homology"/>